<proteinExistence type="predicted"/>
<sequence length="423" mass="47026">MTDTGWIDLALVSARPQAMGALLRYFRNLDLAEEAFQEACIRALKNWPRTGPPRDPAAWLIFVGRNSGIDKVRRQSRETALPPEELLSDLDDRESELADRLDGAHYRDDILRLLFVCSNPALPATQQIALALRIVSGLSVRQIARAFLVSEAAMEQRITRAKARVAAAGIPFETPDAVDRAERLAAVATMIYLVFNEGYSAMNGPEGVSADLCDEAIRLSRLLLRLFPAEPEMMGLTALLLLQHSRARARFDANGAVVLLEDQDRRLWSRPMITEALAMIDKAMRHRRPGPYQIQAAIAALHARAERPEQTDWEEIDLLYQALERLQPSPVVTLNRAVAVSKREGPEAALAMVEPLGERLSGYFYYHGLRGGLLKQLGRACEARTAFDRAIALATNASEAAYIRMQLDHLAAEPATVAEEEKR</sequence>
<organism>
    <name type="scientific">Rhizobium meliloti (strain 1021)</name>
    <name type="common">Ensifer meliloti</name>
    <name type="synonym">Sinorhizobium meliloti</name>
    <dbReference type="NCBI Taxonomy" id="266834"/>
    <lineage>
        <taxon>Bacteria</taxon>
        <taxon>Pseudomonadati</taxon>
        <taxon>Pseudomonadota</taxon>
        <taxon>Alphaproteobacteria</taxon>
        <taxon>Hyphomicrobiales</taxon>
        <taxon>Rhizobiaceae</taxon>
        <taxon>Sinorhizobium/Ensifer group</taxon>
        <taxon>Sinorhizobium</taxon>
    </lineage>
</organism>
<accession>Q52997</accession>
<reference key="1">
    <citation type="journal article" date="2001" name="Proc. Natl. Acad. Sci. U.S.A.">
        <title>Analysis of the chromosome sequence of the legume symbiont Sinorhizobium meliloti strain 1021.</title>
        <authorList>
            <person name="Capela D."/>
            <person name="Barloy-Hubler F."/>
            <person name="Gouzy J."/>
            <person name="Bothe G."/>
            <person name="Ampe F."/>
            <person name="Batut J."/>
            <person name="Boistard P."/>
            <person name="Becker A."/>
            <person name="Boutry M."/>
            <person name="Cadieu E."/>
            <person name="Dreano S."/>
            <person name="Gloux S."/>
            <person name="Godrie T."/>
            <person name="Goffeau A."/>
            <person name="Kahn D."/>
            <person name="Kiss E."/>
            <person name="Lelaure V."/>
            <person name="Masuy D."/>
            <person name="Pohl T."/>
            <person name="Portetelle D."/>
            <person name="Puehler A."/>
            <person name="Purnelle B."/>
            <person name="Ramsperger U."/>
            <person name="Renard C."/>
            <person name="Thebault P."/>
            <person name="Vandenbol M."/>
            <person name="Weidner S."/>
            <person name="Galibert F."/>
        </authorList>
    </citation>
    <scope>NUCLEOTIDE SEQUENCE [LARGE SCALE GENOMIC DNA]</scope>
    <source>
        <strain>1021</strain>
    </source>
</reference>
<reference key="2">
    <citation type="journal article" date="2001" name="Science">
        <title>The composite genome of the legume symbiont Sinorhizobium meliloti.</title>
        <authorList>
            <person name="Galibert F."/>
            <person name="Finan T.M."/>
            <person name="Long S.R."/>
            <person name="Puehler A."/>
            <person name="Abola P."/>
            <person name="Ampe F."/>
            <person name="Barloy-Hubler F."/>
            <person name="Barnett M.J."/>
            <person name="Becker A."/>
            <person name="Boistard P."/>
            <person name="Bothe G."/>
            <person name="Boutry M."/>
            <person name="Bowser L."/>
            <person name="Buhrmester J."/>
            <person name="Cadieu E."/>
            <person name="Capela D."/>
            <person name="Chain P."/>
            <person name="Cowie A."/>
            <person name="Davis R.W."/>
            <person name="Dreano S."/>
            <person name="Federspiel N.A."/>
            <person name="Fisher R.F."/>
            <person name="Gloux S."/>
            <person name="Godrie T."/>
            <person name="Goffeau A."/>
            <person name="Golding B."/>
            <person name="Gouzy J."/>
            <person name="Gurjal M."/>
            <person name="Hernandez-Lucas I."/>
            <person name="Hong A."/>
            <person name="Huizar L."/>
            <person name="Hyman R.W."/>
            <person name="Jones T."/>
            <person name="Kahn D."/>
            <person name="Kahn M.L."/>
            <person name="Kalman S."/>
            <person name="Keating D.H."/>
            <person name="Kiss E."/>
            <person name="Komp C."/>
            <person name="Lelaure V."/>
            <person name="Masuy D."/>
            <person name="Palm C."/>
            <person name="Peck M.C."/>
            <person name="Pohl T.M."/>
            <person name="Portetelle D."/>
            <person name="Purnelle B."/>
            <person name="Ramsperger U."/>
            <person name="Surzycki R."/>
            <person name="Thebault P."/>
            <person name="Vandenbol M."/>
            <person name="Vorhoelter F.J."/>
            <person name="Weidner S."/>
            <person name="Wells D.H."/>
            <person name="Wong K."/>
            <person name="Yeh K.-C."/>
            <person name="Batut J."/>
        </authorList>
    </citation>
    <scope>NUCLEOTIDE SEQUENCE [LARGE SCALE GENOMIC DNA]</scope>
    <source>
        <strain>1021</strain>
    </source>
</reference>
<reference key="3">
    <citation type="journal article" date="1995" name="J. Bacteriol.">
        <title>The dnaA gene of Rhizobium meliloti lies within an unusual gene arrangement.</title>
        <authorList>
            <person name="Margolin W."/>
            <person name="Bramhill D."/>
            <person name="Long S.R."/>
        </authorList>
    </citation>
    <scope>NUCLEOTIDE SEQUENCE [GENOMIC DNA] OF 1-66</scope>
    <source>
        <strain>1021</strain>
    </source>
</reference>
<keyword id="KW-1185">Reference proteome</keyword>
<name>Y370_RHIME</name>
<feature type="chain" id="PRO_0000160639" description="Uncharacterized protein R00370">
    <location>
        <begin position="1"/>
        <end position="423"/>
    </location>
</feature>
<dbReference type="EMBL" id="AL591688">
    <property type="protein sequence ID" value="CAC41807.1"/>
    <property type="molecule type" value="Genomic_DNA"/>
</dbReference>
<dbReference type="EMBL" id="L39265">
    <property type="protein sequence ID" value="AAA91099.1"/>
    <property type="molecule type" value="Genomic_DNA"/>
</dbReference>
<dbReference type="RefSeq" id="NP_384476.1">
    <property type="nucleotide sequence ID" value="NC_003047.1"/>
</dbReference>
<dbReference type="RefSeq" id="WP_010968534.1">
    <property type="nucleotide sequence ID" value="NC_003047.1"/>
</dbReference>
<dbReference type="SMR" id="Q52997"/>
<dbReference type="EnsemblBacteria" id="CAC41807">
    <property type="protein sequence ID" value="CAC41807"/>
    <property type="gene ID" value="SMc01150"/>
</dbReference>
<dbReference type="KEGG" id="sme:SMc01150"/>
<dbReference type="PATRIC" id="fig|266834.11.peg.1742"/>
<dbReference type="eggNOG" id="COG4941">
    <property type="taxonomic scope" value="Bacteria"/>
</dbReference>
<dbReference type="HOGENOM" id="CLU_035311_1_0_5"/>
<dbReference type="OrthoDB" id="9780299at2"/>
<dbReference type="Proteomes" id="UP000001976">
    <property type="component" value="Chromosome"/>
</dbReference>
<dbReference type="GO" id="GO:0003677">
    <property type="term" value="F:DNA binding"/>
    <property type="evidence" value="ECO:0007669"/>
    <property type="project" value="InterPro"/>
</dbReference>
<dbReference type="GO" id="GO:0016987">
    <property type="term" value="F:sigma factor activity"/>
    <property type="evidence" value="ECO:0007669"/>
    <property type="project" value="InterPro"/>
</dbReference>
<dbReference type="GO" id="GO:0006352">
    <property type="term" value="P:DNA-templated transcription initiation"/>
    <property type="evidence" value="ECO:0007669"/>
    <property type="project" value="InterPro"/>
</dbReference>
<dbReference type="Gene3D" id="1.10.1740.10">
    <property type="match status" value="1"/>
</dbReference>
<dbReference type="Gene3D" id="1.25.40.10">
    <property type="entry name" value="Tetratricopeptide repeat domain"/>
    <property type="match status" value="1"/>
</dbReference>
<dbReference type="Gene3D" id="1.10.10.10">
    <property type="entry name" value="Winged helix-like DNA-binding domain superfamily/Winged helix DNA-binding domain"/>
    <property type="match status" value="1"/>
</dbReference>
<dbReference type="InterPro" id="IPR046531">
    <property type="entry name" value="DUF6596"/>
</dbReference>
<dbReference type="InterPro" id="IPR014284">
    <property type="entry name" value="RNA_pol_sigma-70_dom"/>
</dbReference>
<dbReference type="InterPro" id="IPR007627">
    <property type="entry name" value="RNA_pol_sigma70_r2"/>
</dbReference>
<dbReference type="InterPro" id="IPR013249">
    <property type="entry name" value="RNA_pol_sigma70_r4_t2"/>
</dbReference>
<dbReference type="InterPro" id="IPR013325">
    <property type="entry name" value="RNA_pol_sigma_r2"/>
</dbReference>
<dbReference type="InterPro" id="IPR013324">
    <property type="entry name" value="RNA_pol_sigma_r3/r4-like"/>
</dbReference>
<dbReference type="InterPro" id="IPR011990">
    <property type="entry name" value="TPR-like_helical_dom_sf"/>
</dbReference>
<dbReference type="InterPro" id="IPR036388">
    <property type="entry name" value="WH-like_DNA-bd_sf"/>
</dbReference>
<dbReference type="NCBIfam" id="TIGR02937">
    <property type="entry name" value="sigma70-ECF"/>
    <property type="match status" value="1"/>
</dbReference>
<dbReference type="PANTHER" id="PTHR47756:SF1">
    <property type="entry name" value="BLL0085 PROTEIN"/>
    <property type="match status" value="1"/>
</dbReference>
<dbReference type="PANTHER" id="PTHR47756">
    <property type="entry name" value="BLL6612 PROTEIN-RELATED"/>
    <property type="match status" value="1"/>
</dbReference>
<dbReference type="Pfam" id="PF20239">
    <property type="entry name" value="DUF6596"/>
    <property type="match status" value="1"/>
</dbReference>
<dbReference type="Pfam" id="PF04542">
    <property type="entry name" value="Sigma70_r2"/>
    <property type="match status" value="1"/>
</dbReference>
<dbReference type="Pfam" id="PF08281">
    <property type="entry name" value="Sigma70_r4_2"/>
    <property type="match status" value="1"/>
</dbReference>
<dbReference type="SUPFAM" id="SSF88946">
    <property type="entry name" value="Sigma2 domain of RNA polymerase sigma factors"/>
    <property type="match status" value="1"/>
</dbReference>
<dbReference type="SUPFAM" id="SSF88659">
    <property type="entry name" value="Sigma3 and sigma4 domains of RNA polymerase sigma factors"/>
    <property type="match status" value="1"/>
</dbReference>
<dbReference type="SUPFAM" id="SSF48452">
    <property type="entry name" value="TPR-like"/>
    <property type="match status" value="1"/>
</dbReference>
<protein>
    <recommendedName>
        <fullName>Uncharacterized protein R00370</fullName>
    </recommendedName>
</protein>
<gene>
    <name type="ordered locus">R00370</name>
    <name type="ORF">SMc01150</name>
</gene>